<accession>B1LQ72</accession>
<feature type="chain" id="PRO_1000116941" description="Sulfate adenylyltransferase subunit 1">
    <location>
        <begin position="1"/>
        <end position="475"/>
    </location>
</feature>
<feature type="domain" description="tr-type G">
    <location>
        <begin position="25"/>
        <end position="239"/>
    </location>
</feature>
<feature type="region of interest" description="G1" evidence="1">
    <location>
        <begin position="34"/>
        <end position="41"/>
    </location>
</feature>
<feature type="region of interest" description="G2" evidence="1">
    <location>
        <begin position="92"/>
        <end position="96"/>
    </location>
</feature>
<feature type="region of interest" description="G3" evidence="1">
    <location>
        <begin position="113"/>
        <end position="116"/>
    </location>
</feature>
<feature type="region of interest" description="G4" evidence="1">
    <location>
        <begin position="168"/>
        <end position="171"/>
    </location>
</feature>
<feature type="region of interest" description="G5" evidence="1">
    <location>
        <begin position="206"/>
        <end position="208"/>
    </location>
</feature>
<feature type="binding site" evidence="2">
    <location>
        <begin position="34"/>
        <end position="41"/>
    </location>
    <ligand>
        <name>GTP</name>
        <dbReference type="ChEBI" id="CHEBI:37565"/>
    </ligand>
</feature>
<feature type="binding site" evidence="2">
    <location>
        <begin position="113"/>
        <end position="117"/>
    </location>
    <ligand>
        <name>GTP</name>
        <dbReference type="ChEBI" id="CHEBI:37565"/>
    </ligand>
</feature>
<feature type="binding site" evidence="2">
    <location>
        <begin position="168"/>
        <end position="171"/>
    </location>
    <ligand>
        <name>GTP</name>
        <dbReference type="ChEBI" id="CHEBI:37565"/>
    </ligand>
</feature>
<protein>
    <recommendedName>
        <fullName evidence="2">Sulfate adenylyltransferase subunit 1</fullName>
        <ecNumber evidence="2">2.7.7.4</ecNumber>
    </recommendedName>
    <alternativeName>
        <fullName evidence="2">ATP-sulfurylase large subunit</fullName>
    </alternativeName>
    <alternativeName>
        <fullName evidence="2">Sulfate adenylate transferase</fullName>
        <shortName evidence="2">SAT</shortName>
    </alternativeName>
</protein>
<gene>
    <name evidence="2" type="primary">cysN</name>
    <name type="ordered locus">EcSMS35_2877</name>
</gene>
<dbReference type="EC" id="2.7.7.4" evidence="2"/>
<dbReference type="EMBL" id="CP000970">
    <property type="protein sequence ID" value="ACB19220.1"/>
    <property type="molecule type" value="Genomic_DNA"/>
</dbReference>
<dbReference type="RefSeq" id="WP_001090361.1">
    <property type="nucleotide sequence ID" value="NC_010498.1"/>
</dbReference>
<dbReference type="SMR" id="B1LQ72"/>
<dbReference type="GeneID" id="93779255"/>
<dbReference type="KEGG" id="ecm:EcSMS35_2877"/>
<dbReference type="HOGENOM" id="CLU_007265_5_2_6"/>
<dbReference type="UniPathway" id="UPA00140">
    <property type="reaction ID" value="UER00204"/>
</dbReference>
<dbReference type="Proteomes" id="UP000007011">
    <property type="component" value="Chromosome"/>
</dbReference>
<dbReference type="GO" id="GO:0005524">
    <property type="term" value="F:ATP binding"/>
    <property type="evidence" value="ECO:0007669"/>
    <property type="project" value="UniProtKB-KW"/>
</dbReference>
<dbReference type="GO" id="GO:0005525">
    <property type="term" value="F:GTP binding"/>
    <property type="evidence" value="ECO:0007669"/>
    <property type="project" value="UniProtKB-UniRule"/>
</dbReference>
<dbReference type="GO" id="GO:0003924">
    <property type="term" value="F:GTPase activity"/>
    <property type="evidence" value="ECO:0007669"/>
    <property type="project" value="InterPro"/>
</dbReference>
<dbReference type="GO" id="GO:0004781">
    <property type="term" value="F:sulfate adenylyltransferase (ATP) activity"/>
    <property type="evidence" value="ECO:0007669"/>
    <property type="project" value="UniProtKB-UniRule"/>
</dbReference>
<dbReference type="GO" id="GO:0070814">
    <property type="term" value="P:hydrogen sulfide biosynthetic process"/>
    <property type="evidence" value="ECO:0007669"/>
    <property type="project" value="UniProtKB-UniRule"/>
</dbReference>
<dbReference type="GO" id="GO:0000103">
    <property type="term" value="P:sulfate assimilation"/>
    <property type="evidence" value="ECO:0007669"/>
    <property type="project" value="UniProtKB-UniRule"/>
</dbReference>
<dbReference type="CDD" id="cd04166">
    <property type="entry name" value="CysN_ATPS"/>
    <property type="match status" value="1"/>
</dbReference>
<dbReference type="CDD" id="cd03695">
    <property type="entry name" value="CysN_NodQ_II"/>
    <property type="match status" value="1"/>
</dbReference>
<dbReference type="CDD" id="cd04095">
    <property type="entry name" value="CysN_NoDQ_III"/>
    <property type="match status" value="1"/>
</dbReference>
<dbReference type="FunFam" id="2.40.30.10:FF:000027">
    <property type="entry name" value="Sulfate adenylyltransferase subunit 1"/>
    <property type="match status" value="1"/>
</dbReference>
<dbReference type="FunFam" id="2.40.30.10:FF:000031">
    <property type="entry name" value="Sulfate adenylyltransferase subunit 1"/>
    <property type="match status" value="1"/>
</dbReference>
<dbReference type="FunFam" id="3.40.50.300:FF:000119">
    <property type="entry name" value="Sulfate adenylyltransferase subunit 1"/>
    <property type="match status" value="1"/>
</dbReference>
<dbReference type="Gene3D" id="3.40.50.300">
    <property type="entry name" value="P-loop containing nucleotide triphosphate hydrolases"/>
    <property type="match status" value="1"/>
</dbReference>
<dbReference type="Gene3D" id="2.40.30.10">
    <property type="entry name" value="Translation factors"/>
    <property type="match status" value="2"/>
</dbReference>
<dbReference type="HAMAP" id="MF_00062">
    <property type="entry name" value="Sulf_adenylyltr_sub1"/>
    <property type="match status" value="1"/>
</dbReference>
<dbReference type="InterPro" id="IPR041757">
    <property type="entry name" value="CysN_GTP-bd"/>
</dbReference>
<dbReference type="InterPro" id="IPR044138">
    <property type="entry name" value="CysN_II"/>
</dbReference>
<dbReference type="InterPro" id="IPR044139">
    <property type="entry name" value="CysN_NoDQ_III"/>
</dbReference>
<dbReference type="InterPro" id="IPR031157">
    <property type="entry name" value="G_TR_CS"/>
</dbReference>
<dbReference type="InterPro" id="IPR054696">
    <property type="entry name" value="GTP-eEF1A_C"/>
</dbReference>
<dbReference type="InterPro" id="IPR027417">
    <property type="entry name" value="P-loop_NTPase"/>
</dbReference>
<dbReference type="InterPro" id="IPR005225">
    <property type="entry name" value="Small_GTP-bd"/>
</dbReference>
<dbReference type="InterPro" id="IPR011779">
    <property type="entry name" value="SO4_adenylTrfase_lsu"/>
</dbReference>
<dbReference type="InterPro" id="IPR000795">
    <property type="entry name" value="T_Tr_GTP-bd_dom"/>
</dbReference>
<dbReference type="InterPro" id="IPR050100">
    <property type="entry name" value="TRAFAC_GTPase_members"/>
</dbReference>
<dbReference type="InterPro" id="IPR009000">
    <property type="entry name" value="Transl_B-barrel_sf"/>
</dbReference>
<dbReference type="InterPro" id="IPR009001">
    <property type="entry name" value="Transl_elong_EF1A/Init_IF2_C"/>
</dbReference>
<dbReference type="NCBIfam" id="TIGR02034">
    <property type="entry name" value="CysN"/>
    <property type="match status" value="1"/>
</dbReference>
<dbReference type="NCBIfam" id="NF003478">
    <property type="entry name" value="PRK05124.1"/>
    <property type="match status" value="1"/>
</dbReference>
<dbReference type="NCBIfam" id="TIGR00231">
    <property type="entry name" value="small_GTP"/>
    <property type="match status" value="1"/>
</dbReference>
<dbReference type="PANTHER" id="PTHR23115">
    <property type="entry name" value="TRANSLATION FACTOR"/>
    <property type="match status" value="1"/>
</dbReference>
<dbReference type="Pfam" id="PF22594">
    <property type="entry name" value="GTP-eEF1A_C"/>
    <property type="match status" value="1"/>
</dbReference>
<dbReference type="Pfam" id="PF00009">
    <property type="entry name" value="GTP_EFTU"/>
    <property type="match status" value="1"/>
</dbReference>
<dbReference type="PRINTS" id="PR00315">
    <property type="entry name" value="ELONGATNFCT"/>
</dbReference>
<dbReference type="SUPFAM" id="SSF50465">
    <property type="entry name" value="EF-Tu/eEF-1alpha/eIF2-gamma C-terminal domain"/>
    <property type="match status" value="1"/>
</dbReference>
<dbReference type="SUPFAM" id="SSF52540">
    <property type="entry name" value="P-loop containing nucleoside triphosphate hydrolases"/>
    <property type="match status" value="1"/>
</dbReference>
<dbReference type="SUPFAM" id="SSF50447">
    <property type="entry name" value="Translation proteins"/>
    <property type="match status" value="1"/>
</dbReference>
<dbReference type="PROSITE" id="PS00301">
    <property type="entry name" value="G_TR_1"/>
    <property type="match status" value="1"/>
</dbReference>
<dbReference type="PROSITE" id="PS51722">
    <property type="entry name" value="G_TR_2"/>
    <property type="match status" value="1"/>
</dbReference>
<evidence type="ECO:0000250" key="1"/>
<evidence type="ECO:0000255" key="2">
    <source>
        <dbReference type="HAMAP-Rule" id="MF_00062"/>
    </source>
</evidence>
<keyword id="KW-0067">ATP-binding</keyword>
<keyword id="KW-0342">GTP-binding</keyword>
<keyword id="KW-0547">Nucleotide-binding</keyword>
<keyword id="KW-0548">Nucleotidyltransferase</keyword>
<keyword id="KW-0808">Transferase</keyword>
<name>CYSN_ECOSM</name>
<proteinExistence type="inferred from homology"/>
<reference key="1">
    <citation type="journal article" date="2008" name="J. Bacteriol.">
        <title>Insights into the environmental resistance gene pool from the genome sequence of the multidrug-resistant environmental isolate Escherichia coli SMS-3-5.</title>
        <authorList>
            <person name="Fricke W.F."/>
            <person name="Wright M.S."/>
            <person name="Lindell A.H."/>
            <person name="Harkins D.M."/>
            <person name="Baker-Austin C."/>
            <person name="Ravel J."/>
            <person name="Stepanauskas R."/>
        </authorList>
    </citation>
    <scope>NUCLEOTIDE SEQUENCE [LARGE SCALE GENOMIC DNA]</scope>
    <source>
        <strain>SMS-3-5 / SECEC</strain>
    </source>
</reference>
<comment type="function">
    <text evidence="2">With CysD forms the ATP sulfurylase (ATPS) that catalyzes the adenylation of sulfate producing adenosine 5'-phosphosulfate (APS) and diphosphate, the first enzymatic step in sulfur assimilation pathway. APS synthesis involves the formation of a high-energy phosphoric-sulfuric acid anhydride bond driven by GTP hydrolysis by CysN coupled to ATP hydrolysis by CysD.</text>
</comment>
<comment type="catalytic activity">
    <reaction evidence="2">
        <text>sulfate + ATP + H(+) = adenosine 5'-phosphosulfate + diphosphate</text>
        <dbReference type="Rhea" id="RHEA:18133"/>
        <dbReference type="ChEBI" id="CHEBI:15378"/>
        <dbReference type="ChEBI" id="CHEBI:16189"/>
        <dbReference type="ChEBI" id="CHEBI:30616"/>
        <dbReference type="ChEBI" id="CHEBI:33019"/>
        <dbReference type="ChEBI" id="CHEBI:58243"/>
        <dbReference type="EC" id="2.7.7.4"/>
    </reaction>
</comment>
<comment type="pathway">
    <text evidence="2">Sulfur metabolism; hydrogen sulfide biosynthesis; sulfite from sulfate: step 1/3.</text>
</comment>
<comment type="subunit">
    <text evidence="2">Heterodimer composed of CysD, the smaller subunit, and CysN.</text>
</comment>
<comment type="similarity">
    <text evidence="2">Belongs to the TRAFAC class translation factor GTPase superfamily. Classic translation factor GTPase family. CysN/NodQ subfamily.</text>
</comment>
<organism>
    <name type="scientific">Escherichia coli (strain SMS-3-5 / SECEC)</name>
    <dbReference type="NCBI Taxonomy" id="439855"/>
    <lineage>
        <taxon>Bacteria</taxon>
        <taxon>Pseudomonadati</taxon>
        <taxon>Pseudomonadota</taxon>
        <taxon>Gammaproteobacteria</taxon>
        <taxon>Enterobacterales</taxon>
        <taxon>Enterobacteriaceae</taxon>
        <taxon>Escherichia</taxon>
    </lineage>
</organism>
<sequence>MNTALAQQIANEGGVEAWMIAQQHKSLLRFLTCGSVDDGKSTLIGRLLHDTRQIYEDQLSSLHNDSKRHGTQGEKLDLALLVDGLQAEREQGITIDVAYRYFSTEKRKFIIADTPGHEQYTRNMATGASTCELAILLIDARKGVLDQTRRHSFISTLLGIKHLVVAINKMDLVDYSEETFTRIREDYLTFAGQLPGNLDIRFVPLSALEGDNVASQSESMPWYSGPTLLEVLETVEIQRVVDAQPMRFPVQYVNRPNLDFRGYAGTLASGRVEVGQRVKVLPSGVESNVARIVTFDGDREEAFAGEAITLVLTDEIDISRGDLLLAADEALPAVQSASVDVVWMAEQPLSPGQSYDIKIAGKKTRARVDGIRYQVDINNLTQREVENLPLNGIGLVDLTFDEPLVLDRYQQNPVTGGLIFIDRLSNVTVGAGMVHEPVSQATAAPSEFSAFELELNALVRRHFPHWGARDLLGDK</sequence>